<protein>
    <recommendedName>
        <fullName evidence="15">Diacylglycerol O-acyltransferase 2</fullName>
        <ecNumber evidence="9 11">2.3.1.20</ecNumber>
    </recommendedName>
    <alternativeName>
        <fullName>Acyl-CoA retinol O-fatty-acyltransferase</fullName>
        <shortName>ARAT</shortName>
        <shortName>Retinol O-fatty-acyltransferase</shortName>
        <ecNumber evidence="2">2.3.1.76</ecNumber>
    </alternativeName>
    <alternativeName>
        <fullName>Diglyceride acyltransferase 2</fullName>
    </alternativeName>
</protein>
<comment type="function">
    <text evidence="2 4 8 12 13">Essential acyltransferase that catalyzes the terminal and only committed step in triacylglycerol synthesis by using diacylglycerol and fatty acyl CoA as substrates. Required for synthesis and storage of intracellular triglycerides. Probably plays a central role in cytosolic lipid accumulation. In liver, is primarily responsible for incorporating endogenously synthesized fatty acids into triglycerides. Also functions as an acyl-CoA retinol acyltransferase (ARAT) (By similarity). Also able to use 1-monoalkylglycerol (1-MAkG) as an acyl acceptor for the synthesis of monoalkyl-monoacylglycerol (MAMAG) (By similarity).</text>
</comment>
<comment type="catalytic activity">
    <reaction evidence="9 11">
        <text>an acyl-CoA + a 1,2-diacyl-sn-glycerol = a triacyl-sn-glycerol + CoA</text>
        <dbReference type="Rhea" id="RHEA:10868"/>
        <dbReference type="ChEBI" id="CHEBI:17815"/>
        <dbReference type="ChEBI" id="CHEBI:57287"/>
        <dbReference type="ChEBI" id="CHEBI:58342"/>
        <dbReference type="ChEBI" id="CHEBI:64615"/>
        <dbReference type="EC" id="2.3.1.20"/>
    </reaction>
    <physiologicalReaction direction="left-to-right" evidence="15">
        <dbReference type="Rhea" id="RHEA:10869"/>
    </physiologicalReaction>
</comment>
<comment type="catalytic activity">
    <reaction>
        <text>all-trans-retinol + an acyl-CoA = an all-trans-retinyl ester + CoA</text>
        <dbReference type="Rhea" id="RHEA:11488"/>
        <dbReference type="ChEBI" id="CHEBI:17336"/>
        <dbReference type="ChEBI" id="CHEBI:57287"/>
        <dbReference type="ChEBI" id="CHEBI:58342"/>
        <dbReference type="ChEBI" id="CHEBI:63410"/>
        <dbReference type="EC" id="2.3.1.76"/>
    </reaction>
    <physiologicalReaction direction="left-to-right" evidence="15">
        <dbReference type="Rhea" id="RHEA:11489"/>
    </physiologicalReaction>
</comment>
<comment type="catalytic activity">
    <reaction evidence="9 11">
        <text>1,2-di-(9Z-octadecenoyl)-sn-glycerol + hexadecanoyl-CoA = 1,2-di-(9Z)-octadecenoyl-3-hexadecanoyl-sn-glycerol + CoA</text>
        <dbReference type="Rhea" id="RHEA:38163"/>
        <dbReference type="ChEBI" id="CHEBI:52333"/>
        <dbReference type="ChEBI" id="CHEBI:57287"/>
        <dbReference type="ChEBI" id="CHEBI:57379"/>
        <dbReference type="ChEBI" id="CHEBI:75583"/>
    </reaction>
    <physiologicalReaction direction="left-to-right" evidence="9 17">
        <dbReference type="Rhea" id="RHEA:38164"/>
    </physiologicalReaction>
</comment>
<comment type="catalytic activity">
    <reaction evidence="12 14">
        <text>1,2-di-(9Z-octadecenoyl)-sn-glycerol + (9Z)-octadecenoyl-CoA = 1,2,3-tri-(9Z-octadecenoyl)-glycerol + CoA</text>
        <dbReference type="Rhea" id="RHEA:38219"/>
        <dbReference type="ChEBI" id="CHEBI:52333"/>
        <dbReference type="ChEBI" id="CHEBI:53753"/>
        <dbReference type="ChEBI" id="CHEBI:57287"/>
        <dbReference type="ChEBI" id="CHEBI:57387"/>
    </reaction>
    <physiologicalReaction direction="left-to-right" evidence="18 19">
        <dbReference type="Rhea" id="RHEA:38220"/>
    </physiologicalReaction>
</comment>
<comment type="catalytic activity">
    <reaction evidence="14">
        <text>1,3-di-(9Z-octadecenoyl)-glycerol + (9Z)-octadecenoyl-CoA = 1,2,3-tri-(9Z-octadecenoyl)-glycerol + CoA</text>
        <dbReference type="Rhea" id="RHEA:38435"/>
        <dbReference type="ChEBI" id="CHEBI:53753"/>
        <dbReference type="ChEBI" id="CHEBI:57287"/>
        <dbReference type="ChEBI" id="CHEBI:57387"/>
        <dbReference type="ChEBI" id="CHEBI:75735"/>
    </reaction>
    <physiologicalReaction direction="left-to-right" evidence="19">
        <dbReference type="Rhea" id="RHEA:38436"/>
    </physiologicalReaction>
</comment>
<comment type="catalytic activity">
    <reaction evidence="14">
        <text>2,3-di-(9Z)-octadecenoyl-sn-glycerol + (9Z)-octadecenoyl-CoA = 1,2,3-tri-(9Z-octadecenoyl)-glycerol + CoA</text>
        <dbReference type="Rhea" id="RHEA:38439"/>
        <dbReference type="ChEBI" id="CHEBI:53753"/>
        <dbReference type="ChEBI" id="CHEBI:57287"/>
        <dbReference type="ChEBI" id="CHEBI:57387"/>
        <dbReference type="ChEBI" id="CHEBI:75824"/>
    </reaction>
    <physiologicalReaction direction="left-to-right" evidence="19">
        <dbReference type="Rhea" id="RHEA:38440"/>
    </physiologicalReaction>
</comment>
<comment type="catalytic activity">
    <reaction evidence="9">
        <text>2-(9Z-octadecenoyl)-glycerol + hexadecanoyl-CoA = 1-hexadecanoyl-2-(9Z-octadecenoyl)-sn-glycerol + CoA</text>
        <dbReference type="Rhea" id="RHEA:38071"/>
        <dbReference type="ChEBI" id="CHEBI:57287"/>
        <dbReference type="ChEBI" id="CHEBI:57379"/>
        <dbReference type="ChEBI" id="CHEBI:73990"/>
        <dbReference type="ChEBI" id="CHEBI:75466"/>
    </reaction>
    <physiologicalReaction direction="left-to-right" evidence="16">
        <dbReference type="Rhea" id="RHEA:38072"/>
    </physiologicalReaction>
</comment>
<comment type="catalytic activity">
    <reaction evidence="2">
        <text>2-(9Z-octadecenoyl)-glycerol + (9Z)-octadecenoyl-CoA = 1,2-di-(9Z-octadecenoyl)-sn-glycerol + CoA</text>
        <dbReference type="Rhea" id="RHEA:37911"/>
        <dbReference type="ChEBI" id="CHEBI:52333"/>
        <dbReference type="ChEBI" id="CHEBI:57287"/>
        <dbReference type="ChEBI" id="CHEBI:57387"/>
        <dbReference type="ChEBI" id="CHEBI:73990"/>
    </reaction>
    <physiologicalReaction direction="left-to-right" evidence="2">
        <dbReference type="Rhea" id="RHEA:37912"/>
    </physiologicalReaction>
</comment>
<comment type="catalytic activity">
    <reaction evidence="2">
        <text>all-trans-retinol + hexadecanoyl-CoA = all-trans-retinyl hexadecanoate + CoA</text>
        <dbReference type="Rhea" id="RHEA:38175"/>
        <dbReference type="ChEBI" id="CHEBI:17336"/>
        <dbReference type="ChEBI" id="CHEBI:17616"/>
        <dbReference type="ChEBI" id="CHEBI:57287"/>
        <dbReference type="ChEBI" id="CHEBI:57379"/>
    </reaction>
    <physiologicalReaction direction="left-to-right" evidence="2">
        <dbReference type="Rhea" id="RHEA:38176"/>
    </physiologicalReaction>
</comment>
<comment type="catalytic activity">
    <reaction evidence="2">
        <text>1-O-(9Z-octadecenyl)-glycerol + (9Z)-octadecenoyl-CoA = 1-O-(9Z-octadecyl)-3-(9Z-octadecenoyl)-glycerol + CoA</text>
        <dbReference type="Rhea" id="RHEA:55340"/>
        <dbReference type="ChEBI" id="CHEBI:34116"/>
        <dbReference type="ChEBI" id="CHEBI:57287"/>
        <dbReference type="ChEBI" id="CHEBI:57387"/>
        <dbReference type="ChEBI" id="CHEBI:197429"/>
    </reaction>
    <physiologicalReaction direction="left-to-right" evidence="2">
        <dbReference type="Rhea" id="RHEA:55341"/>
    </physiologicalReaction>
</comment>
<comment type="catalytic activity">
    <reaction evidence="2">
        <text>1-(9Z-octadecenoyl)-glycerol + (9Z)-octadecenoyl-CoA = 1,2-di-(9Z-octadecenoyl)-glycerol + CoA</text>
        <dbReference type="Rhea" id="RHEA:37915"/>
        <dbReference type="ChEBI" id="CHEBI:52323"/>
        <dbReference type="ChEBI" id="CHEBI:57287"/>
        <dbReference type="ChEBI" id="CHEBI:57387"/>
        <dbReference type="ChEBI" id="CHEBI:75342"/>
    </reaction>
    <physiologicalReaction direction="left-to-right" evidence="2">
        <dbReference type="Rhea" id="RHEA:37916"/>
    </physiologicalReaction>
</comment>
<comment type="activity regulation">
    <text evidence="1">Inhibited by niacin.</text>
</comment>
<comment type="pathway">
    <text>Glycerolipid metabolism; triacylglycerol biosynthesis.</text>
</comment>
<comment type="subunit">
    <text evidence="2 12">Forms multimeric complexes consisting of several DGAT2 subunits (PubMed:21680734). Interacts with SLC27A1 and this interaction is enhanced in the presence of ZFYVE1 (By similarity).</text>
</comment>
<comment type="subcellular location">
    <subcellularLocation>
        <location evidence="2">Endoplasmic reticulum membrane</location>
        <topology evidence="2">Multi-pass membrane protein</topology>
    </subcellularLocation>
    <subcellularLocation>
        <location evidence="2">Lipid droplet</location>
    </subcellularLocation>
    <subcellularLocation>
        <location evidence="2">Cytoplasm</location>
        <location evidence="2">Perinuclear region</location>
    </subcellularLocation>
</comment>
<comment type="tissue specificity">
    <text evidence="4">Predominantly expressed in liver. Also expressed in testis.</text>
</comment>
<comment type="induction">
    <text evidence="5 6 10">In white adipose tissue, it is regulated by leptin. By insulin. Up-regulated in diabetic mice. Down-regulated upon fasting and replenished upon refeeding in adipose tissue and liver. Down-regulation in obese animals can reduce hepatic lipogenesis and hepatic steatosis as well as attenuate hyperlipidemia, thereby leading to an improvement in metabolic syndrome.</text>
</comment>
<comment type="disruption phenotype">
    <text evidence="7">Mice are lipopenic and die soon after birth, apparently from profound reductions in substrates for energy metabolism and from impaired permeability barrier function in the skin.</text>
</comment>
<comment type="similarity">
    <text evidence="15">Belongs to the diacylglycerol acyltransferase family.</text>
</comment>
<sequence>MKTLIAAYSGVLRGERRAEAARSENKNKGSALSREGSGRWGTGSSILSALQDIFSVTWLNRSKVEKQLQVISVLQWVLSFLVLGVACSVILMYTFCTDCWLIAVLYFTWLAFDWNTPKKGGRRSQWVRNWAVWRYFRDYFPIQLVKTHNLLTTRNYIFGYHPHGIMGLGAFCNFSTEATEVSKKFPGIRPYLATLAGNFRMPVLREYLMSGGICPVNRDTIDYLLSKNGSGNAIIIVVGGAAESLSSMPGKNAVTLKNRKGFVKLALRHGADLVPTYSFGENEVYKQVIFEEGSWGRWVQKKFQKYIGFAPCIFHGRGLFSSDTWGLVPYSKPITTVVGEPITVPKLEHPTQKDIDLYHAMYMEALVKLFDNHKTKFGLPETEVLEVN</sequence>
<feature type="chain" id="PRO_0000249046" description="Diacylglycerol O-acyltransferase 2">
    <location>
        <begin position="1"/>
        <end position="388"/>
    </location>
</feature>
<feature type="topological domain" description="Cytoplasmic" evidence="3">
    <location>
        <begin position="1"/>
        <end position="69"/>
    </location>
</feature>
<feature type="transmembrane region" description="Helical" evidence="3">
    <location>
        <begin position="70"/>
        <end position="88"/>
    </location>
</feature>
<feature type="topological domain" description="Lumenal" evidence="3">
    <location>
        <begin position="89"/>
        <end position="92"/>
    </location>
</feature>
<feature type="transmembrane region" description="Helical" evidence="3">
    <location>
        <begin position="93"/>
        <end position="112"/>
    </location>
</feature>
<feature type="topological domain" description="Cytoplasmic" evidence="3">
    <location>
        <begin position="113"/>
        <end position="388"/>
    </location>
</feature>
<organism>
    <name type="scientific">Mus musculus</name>
    <name type="common">Mouse</name>
    <dbReference type="NCBI Taxonomy" id="10090"/>
    <lineage>
        <taxon>Eukaryota</taxon>
        <taxon>Metazoa</taxon>
        <taxon>Chordata</taxon>
        <taxon>Craniata</taxon>
        <taxon>Vertebrata</taxon>
        <taxon>Euteleostomi</taxon>
        <taxon>Mammalia</taxon>
        <taxon>Eutheria</taxon>
        <taxon>Euarchontoglires</taxon>
        <taxon>Glires</taxon>
        <taxon>Rodentia</taxon>
        <taxon>Myomorpha</taxon>
        <taxon>Muroidea</taxon>
        <taxon>Muridae</taxon>
        <taxon>Murinae</taxon>
        <taxon>Mus</taxon>
        <taxon>Mus</taxon>
    </lineage>
</organism>
<dbReference type="EC" id="2.3.1.20" evidence="9 11"/>
<dbReference type="EC" id="2.3.1.76" evidence="2"/>
<dbReference type="EMBL" id="AF384160">
    <property type="protein sequence ID" value="AAK84175.1"/>
    <property type="molecule type" value="mRNA"/>
</dbReference>
<dbReference type="EMBL" id="AK002443">
    <property type="protein sequence ID" value="BAB22105.1"/>
    <property type="molecule type" value="mRNA"/>
</dbReference>
<dbReference type="EMBL" id="BC043447">
    <property type="protein sequence ID" value="AAH43447.1"/>
    <property type="molecule type" value="mRNA"/>
</dbReference>
<dbReference type="CCDS" id="CCDS21477.1"/>
<dbReference type="RefSeq" id="NP_080660.1">
    <property type="nucleotide sequence ID" value="NM_026384.3"/>
</dbReference>
<dbReference type="BioGRID" id="212449">
    <property type="interactions" value="3"/>
</dbReference>
<dbReference type="FunCoup" id="Q9DCV3">
    <property type="interactions" value="845"/>
</dbReference>
<dbReference type="STRING" id="10090.ENSMUSP00000033001"/>
<dbReference type="ChEMBL" id="CHEMBL1075285"/>
<dbReference type="SwissLipids" id="SLP:000000303"/>
<dbReference type="iPTMnet" id="Q9DCV3"/>
<dbReference type="PhosphoSitePlus" id="Q9DCV3"/>
<dbReference type="SwissPalm" id="Q9DCV3"/>
<dbReference type="PaxDb" id="10090-ENSMUSP00000033001"/>
<dbReference type="ProteomicsDB" id="279858"/>
<dbReference type="Antibodypedia" id="1632">
    <property type="antibodies" value="307 antibodies from 36 providers"/>
</dbReference>
<dbReference type="DNASU" id="67800"/>
<dbReference type="Ensembl" id="ENSMUST00000033001.6">
    <property type="protein sequence ID" value="ENSMUSP00000033001.5"/>
    <property type="gene ID" value="ENSMUSG00000030747.6"/>
</dbReference>
<dbReference type="GeneID" id="67800"/>
<dbReference type="KEGG" id="mmu:67800"/>
<dbReference type="UCSC" id="uc009ile.1">
    <property type="organism name" value="mouse"/>
</dbReference>
<dbReference type="AGR" id="MGI:1915050"/>
<dbReference type="CTD" id="84649"/>
<dbReference type="MGI" id="MGI:1915050">
    <property type="gene designation" value="Dgat2"/>
</dbReference>
<dbReference type="VEuPathDB" id="HostDB:ENSMUSG00000030747"/>
<dbReference type="eggNOG" id="KOG0831">
    <property type="taxonomic scope" value="Eukaryota"/>
</dbReference>
<dbReference type="GeneTree" id="ENSGT01030000234582"/>
<dbReference type="HOGENOM" id="CLU_023995_0_1_1"/>
<dbReference type="InParanoid" id="Q9DCV3"/>
<dbReference type="OMA" id="IMGVACT"/>
<dbReference type="OrthoDB" id="264532at2759"/>
<dbReference type="PhylomeDB" id="Q9DCV3"/>
<dbReference type="TreeFam" id="TF314707"/>
<dbReference type="BRENDA" id="2.3.1.20">
    <property type="organism ID" value="3474"/>
</dbReference>
<dbReference type="Reactome" id="R-MMU-1482883">
    <property type="pathway name" value="Acyl chain remodeling of DAG and TAG"/>
</dbReference>
<dbReference type="Reactome" id="R-MMU-75109">
    <property type="pathway name" value="Triglyceride biosynthesis"/>
</dbReference>
<dbReference type="UniPathway" id="UPA00282"/>
<dbReference type="BioGRID-ORCS" id="67800">
    <property type="hits" value="2 hits in 78 CRISPR screens"/>
</dbReference>
<dbReference type="ChiTaRS" id="Dgat2">
    <property type="organism name" value="mouse"/>
</dbReference>
<dbReference type="PRO" id="PR:Q9DCV3"/>
<dbReference type="Proteomes" id="UP000000589">
    <property type="component" value="Chromosome 7"/>
</dbReference>
<dbReference type="RNAct" id="Q9DCV3">
    <property type="molecule type" value="protein"/>
</dbReference>
<dbReference type="Bgee" id="ENSMUSG00000030747">
    <property type="expression patterns" value="Expressed in epithelium of small intestine and 255 other cell types or tissues"/>
</dbReference>
<dbReference type="ExpressionAtlas" id="Q9DCV3">
    <property type="expression patterns" value="baseline and differential"/>
</dbReference>
<dbReference type="GO" id="GO:0005829">
    <property type="term" value="C:cytosol"/>
    <property type="evidence" value="ECO:0007669"/>
    <property type="project" value="Ensembl"/>
</dbReference>
<dbReference type="GO" id="GO:0005783">
    <property type="term" value="C:endoplasmic reticulum"/>
    <property type="evidence" value="ECO:0000314"/>
    <property type="project" value="BHF-UCL"/>
</dbReference>
<dbReference type="GO" id="GO:0005789">
    <property type="term" value="C:endoplasmic reticulum membrane"/>
    <property type="evidence" value="ECO:0000314"/>
    <property type="project" value="BHF-UCL"/>
</dbReference>
<dbReference type="GO" id="GO:0005811">
    <property type="term" value="C:lipid droplet"/>
    <property type="evidence" value="ECO:0007669"/>
    <property type="project" value="UniProtKB-SubCell"/>
</dbReference>
<dbReference type="GO" id="GO:0016020">
    <property type="term" value="C:membrane"/>
    <property type="evidence" value="ECO:0000314"/>
    <property type="project" value="MGI"/>
</dbReference>
<dbReference type="GO" id="GO:1990578">
    <property type="term" value="C:perinuclear endoplasmic reticulum membrane"/>
    <property type="evidence" value="ECO:0000250"/>
    <property type="project" value="UniProtKB"/>
</dbReference>
<dbReference type="GO" id="GO:0048471">
    <property type="term" value="C:perinuclear region of cytoplasm"/>
    <property type="evidence" value="ECO:0000314"/>
    <property type="project" value="BHF-UCL"/>
</dbReference>
<dbReference type="GO" id="GO:0003846">
    <property type="term" value="F:2-acylglycerol O-acyltransferase activity"/>
    <property type="evidence" value="ECO:0000314"/>
    <property type="project" value="MGI"/>
</dbReference>
<dbReference type="GO" id="GO:0004144">
    <property type="term" value="F:diacylglycerol O-acyltransferase activity"/>
    <property type="evidence" value="ECO:0000314"/>
    <property type="project" value="MGI"/>
</dbReference>
<dbReference type="GO" id="GO:0042803">
    <property type="term" value="F:protein homodimerization activity"/>
    <property type="evidence" value="ECO:0000353"/>
    <property type="project" value="BHF-UCL"/>
</dbReference>
<dbReference type="GO" id="GO:0050252">
    <property type="term" value="F:retinol O-fatty-acyltransferase activity"/>
    <property type="evidence" value="ECO:0007669"/>
    <property type="project" value="UniProtKB-EC"/>
</dbReference>
<dbReference type="GO" id="GO:0071400">
    <property type="term" value="P:cellular response to oleic acid"/>
    <property type="evidence" value="ECO:0000315"/>
    <property type="project" value="BHF-UCL"/>
</dbReference>
<dbReference type="GO" id="GO:0042632">
    <property type="term" value="P:cholesterol homeostasis"/>
    <property type="evidence" value="ECO:0000315"/>
    <property type="project" value="BHF-UCL"/>
</dbReference>
<dbReference type="GO" id="GO:0006651">
    <property type="term" value="P:diacylglycerol biosynthetic process"/>
    <property type="evidence" value="ECO:0000314"/>
    <property type="project" value="UniProtKB"/>
</dbReference>
<dbReference type="GO" id="GO:0046339">
    <property type="term" value="P:diacylglycerol metabolic process"/>
    <property type="evidence" value="ECO:0000314"/>
    <property type="project" value="BHF-UCL"/>
</dbReference>
<dbReference type="GO" id="GO:0060613">
    <property type="term" value="P:fat pad development"/>
    <property type="evidence" value="ECO:0000315"/>
    <property type="project" value="BHF-UCL"/>
</dbReference>
<dbReference type="GO" id="GO:0055089">
    <property type="term" value="P:fatty acid homeostasis"/>
    <property type="evidence" value="ECO:0000316"/>
    <property type="project" value="BHF-UCL"/>
</dbReference>
<dbReference type="GO" id="GO:0006071">
    <property type="term" value="P:glycerol metabolic process"/>
    <property type="evidence" value="ECO:0007669"/>
    <property type="project" value="UniProtKB-KW"/>
</dbReference>
<dbReference type="GO" id="GO:0035356">
    <property type="term" value="P:intracellular triglyceride homeostasis"/>
    <property type="evidence" value="ECO:0000315"/>
    <property type="project" value="BHF-UCL"/>
</dbReference>
<dbReference type="GO" id="GO:0019915">
    <property type="term" value="P:lipid storage"/>
    <property type="evidence" value="ECO:0000315"/>
    <property type="project" value="BHF-UCL"/>
</dbReference>
<dbReference type="GO" id="GO:0035336">
    <property type="term" value="P:long-chain fatty-acyl-CoA metabolic process"/>
    <property type="evidence" value="ECO:0000314"/>
    <property type="project" value="BHF-UCL"/>
</dbReference>
<dbReference type="GO" id="GO:0034383">
    <property type="term" value="P:low-density lipoprotein particle clearance"/>
    <property type="evidence" value="ECO:0000315"/>
    <property type="project" value="BHF-UCL"/>
</dbReference>
<dbReference type="GO" id="GO:0006640">
    <property type="term" value="P:monoacylglycerol biosynthetic process"/>
    <property type="evidence" value="ECO:0000250"/>
    <property type="project" value="UniProtKB"/>
</dbReference>
<dbReference type="GO" id="GO:0046322">
    <property type="term" value="P:negative regulation of fatty acid oxidation"/>
    <property type="evidence" value="ECO:0007669"/>
    <property type="project" value="Ensembl"/>
</dbReference>
<dbReference type="GO" id="GO:0045722">
    <property type="term" value="P:positive regulation of gluconeogenesis"/>
    <property type="evidence" value="ECO:0007669"/>
    <property type="project" value="Ensembl"/>
</dbReference>
<dbReference type="GO" id="GO:0010867">
    <property type="term" value="P:positive regulation of triglyceride biosynthetic process"/>
    <property type="evidence" value="ECO:0007669"/>
    <property type="project" value="Ensembl"/>
</dbReference>
<dbReference type="GO" id="GO:0090181">
    <property type="term" value="P:regulation of cholesterol metabolic process"/>
    <property type="evidence" value="ECO:0007669"/>
    <property type="project" value="Ensembl"/>
</dbReference>
<dbReference type="GO" id="GO:0050746">
    <property type="term" value="P:regulation of lipoprotein metabolic process"/>
    <property type="evidence" value="ECO:0007669"/>
    <property type="project" value="Ensembl"/>
</dbReference>
<dbReference type="GO" id="GO:0097006">
    <property type="term" value="P:regulation of plasma lipoprotein particle levels"/>
    <property type="evidence" value="ECO:0000315"/>
    <property type="project" value="BHF-UCL"/>
</dbReference>
<dbReference type="GO" id="GO:0007584">
    <property type="term" value="P:response to nutrient"/>
    <property type="evidence" value="ECO:0007669"/>
    <property type="project" value="Ensembl"/>
</dbReference>
<dbReference type="GO" id="GO:0019432">
    <property type="term" value="P:triglyceride biosynthetic process"/>
    <property type="evidence" value="ECO:0000314"/>
    <property type="project" value="MGI"/>
</dbReference>
<dbReference type="CDD" id="cd07987">
    <property type="entry name" value="LPLAT_MGAT-like"/>
    <property type="match status" value="1"/>
</dbReference>
<dbReference type="InterPro" id="IPR007130">
    <property type="entry name" value="DAGAT"/>
</dbReference>
<dbReference type="PANTHER" id="PTHR12317">
    <property type="entry name" value="DIACYLGLYCEROL O-ACYLTRANSFERASE"/>
    <property type="match status" value="1"/>
</dbReference>
<dbReference type="PANTHER" id="PTHR12317:SF14">
    <property type="entry name" value="DIACYLGLYCEROL O-ACYLTRANSFERASE 2"/>
    <property type="match status" value="1"/>
</dbReference>
<dbReference type="Pfam" id="PF03982">
    <property type="entry name" value="DAGAT"/>
    <property type="match status" value="1"/>
</dbReference>
<reference key="1">
    <citation type="journal article" date="2001" name="J. Biol. Chem.">
        <title>Cloning of DGAT2, a second mammalian diacylglycerol acyltransferase, and related family members.</title>
        <authorList>
            <person name="Cases S."/>
            <person name="Stone S.J."/>
            <person name="Zhou P."/>
            <person name="Yen C.-L.E."/>
            <person name="Tow B."/>
            <person name="Lardizabal K.D."/>
            <person name="Voelker T."/>
            <person name="Farese R.V. Jr."/>
        </authorList>
    </citation>
    <scope>NUCLEOTIDE SEQUENCE [MRNA]</scope>
    <scope>FUNCTION</scope>
    <scope>TISSUE SPECIFICITY</scope>
    <source>
        <tissue>Liver</tissue>
    </source>
</reference>
<reference key="2">
    <citation type="journal article" date="2005" name="Science">
        <title>The transcriptional landscape of the mammalian genome.</title>
        <authorList>
            <person name="Carninci P."/>
            <person name="Kasukawa T."/>
            <person name="Katayama S."/>
            <person name="Gough J."/>
            <person name="Frith M.C."/>
            <person name="Maeda N."/>
            <person name="Oyama R."/>
            <person name="Ravasi T."/>
            <person name="Lenhard B."/>
            <person name="Wells C."/>
            <person name="Kodzius R."/>
            <person name="Shimokawa K."/>
            <person name="Bajic V.B."/>
            <person name="Brenner S.E."/>
            <person name="Batalov S."/>
            <person name="Forrest A.R."/>
            <person name="Zavolan M."/>
            <person name="Davis M.J."/>
            <person name="Wilming L.G."/>
            <person name="Aidinis V."/>
            <person name="Allen J.E."/>
            <person name="Ambesi-Impiombato A."/>
            <person name="Apweiler R."/>
            <person name="Aturaliya R.N."/>
            <person name="Bailey T.L."/>
            <person name="Bansal M."/>
            <person name="Baxter L."/>
            <person name="Beisel K.W."/>
            <person name="Bersano T."/>
            <person name="Bono H."/>
            <person name="Chalk A.M."/>
            <person name="Chiu K.P."/>
            <person name="Choudhary V."/>
            <person name="Christoffels A."/>
            <person name="Clutterbuck D.R."/>
            <person name="Crowe M.L."/>
            <person name="Dalla E."/>
            <person name="Dalrymple B.P."/>
            <person name="de Bono B."/>
            <person name="Della Gatta G."/>
            <person name="di Bernardo D."/>
            <person name="Down T."/>
            <person name="Engstrom P."/>
            <person name="Fagiolini M."/>
            <person name="Faulkner G."/>
            <person name="Fletcher C.F."/>
            <person name="Fukushima T."/>
            <person name="Furuno M."/>
            <person name="Futaki S."/>
            <person name="Gariboldi M."/>
            <person name="Georgii-Hemming P."/>
            <person name="Gingeras T.R."/>
            <person name="Gojobori T."/>
            <person name="Green R.E."/>
            <person name="Gustincich S."/>
            <person name="Harbers M."/>
            <person name="Hayashi Y."/>
            <person name="Hensch T.K."/>
            <person name="Hirokawa N."/>
            <person name="Hill D."/>
            <person name="Huminiecki L."/>
            <person name="Iacono M."/>
            <person name="Ikeo K."/>
            <person name="Iwama A."/>
            <person name="Ishikawa T."/>
            <person name="Jakt M."/>
            <person name="Kanapin A."/>
            <person name="Katoh M."/>
            <person name="Kawasawa Y."/>
            <person name="Kelso J."/>
            <person name="Kitamura H."/>
            <person name="Kitano H."/>
            <person name="Kollias G."/>
            <person name="Krishnan S.P."/>
            <person name="Kruger A."/>
            <person name="Kummerfeld S.K."/>
            <person name="Kurochkin I.V."/>
            <person name="Lareau L.F."/>
            <person name="Lazarevic D."/>
            <person name="Lipovich L."/>
            <person name="Liu J."/>
            <person name="Liuni S."/>
            <person name="McWilliam S."/>
            <person name="Madan Babu M."/>
            <person name="Madera M."/>
            <person name="Marchionni L."/>
            <person name="Matsuda H."/>
            <person name="Matsuzawa S."/>
            <person name="Miki H."/>
            <person name="Mignone F."/>
            <person name="Miyake S."/>
            <person name="Morris K."/>
            <person name="Mottagui-Tabar S."/>
            <person name="Mulder N."/>
            <person name="Nakano N."/>
            <person name="Nakauchi H."/>
            <person name="Ng P."/>
            <person name="Nilsson R."/>
            <person name="Nishiguchi S."/>
            <person name="Nishikawa S."/>
            <person name="Nori F."/>
            <person name="Ohara O."/>
            <person name="Okazaki Y."/>
            <person name="Orlando V."/>
            <person name="Pang K.C."/>
            <person name="Pavan W.J."/>
            <person name="Pavesi G."/>
            <person name="Pesole G."/>
            <person name="Petrovsky N."/>
            <person name="Piazza S."/>
            <person name="Reed J."/>
            <person name="Reid J.F."/>
            <person name="Ring B.Z."/>
            <person name="Ringwald M."/>
            <person name="Rost B."/>
            <person name="Ruan Y."/>
            <person name="Salzberg S.L."/>
            <person name="Sandelin A."/>
            <person name="Schneider C."/>
            <person name="Schoenbach C."/>
            <person name="Sekiguchi K."/>
            <person name="Semple C.A."/>
            <person name="Seno S."/>
            <person name="Sessa L."/>
            <person name="Sheng Y."/>
            <person name="Shibata Y."/>
            <person name="Shimada H."/>
            <person name="Shimada K."/>
            <person name="Silva D."/>
            <person name="Sinclair B."/>
            <person name="Sperling S."/>
            <person name="Stupka E."/>
            <person name="Sugiura K."/>
            <person name="Sultana R."/>
            <person name="Takenaka Y."/>
            <person name="Taki K."/>
            <person name="Tammoja K."/>
            <person name="Tan S.L."/>
            <person name="Tang S."/>
            <person name="Taylor M.S."/>
            <person name="Tegner J."/>
            <person name="Teichmann S.A."/>
            <person name="Ueda H.R."/>
            <person name="van Nimwegen E."/>
            <person name="Verardo R."/>
            <person name="Wei C.L."/>
            <person name="Yagi K."/>
            <person name="Yamanishi H."/>
            <person name="Zabarovsky E."/>
            <person name="Zhu S."/>
            <person name="Zimmer A."/>
            <person name="Hide W."/>
            <person name="Bult C."/>
            <person name="Grimmond S.M."/>
            <person name="Teasdale R.D."/>
            <person name="Liu E.T."/>
            <person name="Brusic V."/>
            <person name="Quackenbush J."/>
            <person name="Wahlestedt C."/>
            <person name="Mattick J.S."/>
            <person name="Hume D.A."/>
            <person name="Kai C."/>
            <person name="Sasaki D."/>
            <person name="Tomaru Y."/>
            <person name="Fukuda S."/>
            <person name="Kanamori-Katayama M."/>
            <person name="Suzuki M."/>
            <person name="Aoki J."/>
            <person name="Arakawa T."/>
            <person name="Iida J."/>
            <person name="Imamura K."/>
            <person name="Itoh M."/>
            <person name="Kato T."/>
            <person name="Kawaji H."/>
            <person name="Kawagashira N."/>
            <person name="Kawashima T."/>
            <person name="Kojima M."/>
            <person name="Kondo S."/>
            <person name="Konno H."/>
            <person name="Nakano K."/>
            <person name="Ninomiya N."/>
            <person name="Nishio T."/>
            <person name="Okada M."/>
            <person name="Plessy C."/>
            <person name="Shibata K."/>
            <person name="Shiraki T."/>
            <person name="Suzuki S."/>
            <person name="Tagami M."/>
            <person name="Waki K."/>
            <person name="Watahiki A."/>
            <person name="Okamura-Oho Y."/>
            <person name="Suzuki H."/>
            <person name="Kawai J."/>
            <person name="Hayashizaki Y."/>
        </authorList>
    </citation>
    <scope>NUCLEOTIDE SEQUENCE [LARGE SCALE MRNA]</scope>
    <source>
        <strain>C57BL/6J</strain>
        <tissue>Kidney</tissue>
    </source>
</reference>
<reference key="3">
    <citation type="journal article" date="2004" name="Genome Res.">
        <title>The status, quality, and expansion of the NIH full-length cDNA project: the Mammalian Gene Collection (MGC).</title>
        <authorList>
            <consortium name="The MGC Project Team"/>
        </authorList>
    </citation>
    <scope>NUCLEOTIDE SEQUENCE [LARGE SCALE MRNA]</scope>
    <source>
        <strain>FVB/N</strain>
        <tissue>Liver</tissue>
    </source>
</reference>
<reference key="4">
    <citation type="journal article" date="2002" name="Biochem. Biophys. Res. Commun.">
        <title>Concerted elevation of acyl-coenzyme A:diacylglycerol acyltransferase (DGAT) activity through independent stimulation of mRNA expression of DGAT1 and DGAT2 by carbohydrate and insulin.</title>
        <authorList>
            <person name="Meegalla R.L."/>
            <person name="Billheimer J.T."/>
            <person name="Cheng D."/>
        </authorList>
    </citation>
    <scope>INDUCTION</scope>
</reference>
<reference key="5">
    <citation type="journal article" date="2003" name="Biochem. Biophys. Res. Commun.">
        <title>A novel diacylglycerol acyltransferase (DGAT2) is decreased in human psoriatic skin and increased in diabetic mice.</title>
        <authorList>
            <person name="Wakimoto K."/>
            <person name="Chiba H."/>
            <person name="Michibata H."/>
            <person name="Seishima M."/>
            <person name="Kawasaki S."/>
            <person name="Okubo K."/>
            <person name="Mitsui H."/>
            <person name="Torii H."/>
            <person name="Imai Y."/>
        </authorList>
    </citation>
    <scope>INDUCTION</scope>
</reference>
<reference key="6">
    <citation type="journal article" date="2004" name="J. Biol. Chem.">
        <title>Lipopenia and skin barrier abnormalities in DGAT2-deficient mice.</title>
        <authorList>
            <person name="Stone S.J."/>
            <person name="Myers H.M."/>
            <person name="Watkins S.M."/>
            <person name="Brown B.E."/>
            <person name="Feingold K.R."/>
            <person name="Elias P.M."/>
            <person name="Farese R.V. Jr."/>
        </authorList>
    </citation>
    <scope>DISRUPTION PHENOTYPE</scope>
</reference>
<reference key="7">
    <citation type="journal article" date="2004" name="J. Lipid Res.">
        <title>Niacin noncompetitively inhibits DGAT2 but not DGAT1 activity in HepG2 cells.</title>
        <authorList>
            <person name="Ganji S.H."/>
            <person name="Tavintharan S."/>
            <person name="Zhu D."/>
            <person name="Xing Y."/>
            <person name="Kamanna V.S."/>
            <person name="Kashyap M.L."/>
        </authorList>
    </citation>
    <scope>ACTIVITY REGULATION</scope>
</reference>
<reference key="8">
    <citation type="journal article" date="2005" name="Hepatology">
        <title>Antisense oligonucleotide reduction of DGAT2 expression improves hepatic steatosis and hyperlipidemia in obese mice.</title>
        <authorList>
            <person name="Yu X.X."/>
            <person name="Murray S.F."/>
            <person name="Pandey S.K."/>
            <person name="Booten S.L."/>
            <person name="Bao D."/>
            <person name="Song X.Z."/>
            <person name="Kelly S."/>
            <person name="Chen S."/>
            <person name="McKay R."/>
            <person name="Monia B.P."/>
            <person name="Bhanot S."/>
        </authorList>
    </citation>
    <scope>INDUCTION</scope>
</reference>
<reference key="9">
    <citation type="journal article" date="2005" name="J. Biol. Chem.">
        <title>Increased very low density lipoprotein secretion and gonadal fat mass in mice overexpressing liver DGAT1.</title>
        <authorList>
            <person name="Yamazaki T."/>
            <person name="Sasaki E."/>
            <person name="Kakinuma C."/>
            <person name="Yano T."/>
            <person name="Miura S."/>
            <person name="Ezaki O."/>
        </authorList>
    </citation>
    <scope>FUNCTION</scope>
</reference>
<reference key="10">
    <citation type="journal article" date="2005" name="J. Lipid Res.">
        <title>The triacylglycerol synthesis enzyme DGAT1 also catalyzes the synthesis of diacylglycerols, waxes, and retinyl esters.</title>
        <authorList>
            <person name="Yen C.L."/>
            <person name="Monetti M."/>
            <person name="Burri B.J."/>
            <person name="Farese R.V. Jr."/>
        </authorList>
    </citation>
    <scope>CATALYTIC ACTIVITY</scope>
</reference>
<reference key="11">
    <citation type="journal article" date="2005" name="J. Lipid Res.">
        <title>A human skin multifunctional O-acyltransferase that catalyzes the synthesis of acylglycerols, waxes, and retinyl esters.</title>
        <authorList>
            <person name="Yen C.-L.E."/>
            <person name="Brown C.H. IV"/>
            <person name="Monetti M."/>
            <person name="Farese R.V. Jr."/>
        </authorList>
    </citation>
    <scope>CATALYTIC ACTIVITY</scope>
</reference>
<reference key="12">
    <citation type="journal article" date="2006" name="J. Biol. Chem.">
        <title>Membrane topology and identification of key functional amino acid residues of murine acyl-CoA:diacylglycerol acyltransferase-2.</title>
        <authorList>
            <person name="Stone S.J."/>
            <person name="Levin M.C."/>
            <person name="Farese R.V. Jr."/>
        </authorList>
    </citation>
    <scope>SUBCELLULAR LOCATION</scope>
    <scope>MEMBRANE TOPOLOGY</scope>
</reference>
<reference key="13">
    <citation type="journal article" date="2011" name="J. Biol. Chem.">
        <title>Murine diacylglycerol acyltransferase-2 (DGAT2) can catalyze triacylglycerol synthesis and promote lipid droplet formation independent of its localization to the endoplasmic reticulum.</title>
        <authorList>
            <person name="McFie P.J."/>
            <person name="Banman S.L."/>
            <person name="Kary S."/>
            <person name="Stone S.J."/>
        </authorList>
    </citation>
    <scope>SUBUNIT</scope>
    <scope>FUNCTION</scope>
    <scope>SUBCELLULAR LOCATION</scope>
    <scope>CATALYTIC ACTIVITY</scope>
</reference>
<reference key="14">
    <citation type="journal article" date="2012" name="J. Biol. Chem.">
        <title>Studies on the substrate and stereo/regioselectivity of adipose triglyceride lipase, hormone-sensitive lipase, and diacylglycerol-O-acyltransferases.</title>
        <authorList>
            <person name="Eichmann T.O."/>
            <person name="Kumari M."/>
            <person name="Haas J.T."/>
            <person name="Farese R.V. Jr."/>
            <person name="Zimmermann R."/>
            <person name="Lass A."/>
            <person name="Zechner R."/>
        </authorList>
    </citation>
    <scope>CATALYTIC ACTIVITY</scope>
</reference>
<reference key="15">
    <citation type="journal article" date="2012" name="J. Lipid Res.">
        <title>The use of stable isotope-labeled glycerol and oleic acid to differentiate the hepatic functions of DGAT1 and -2.</title>
        <authorList>
            <person name="Qi J."/>
            <person name="Lang W."/>
            <person name="Geisler J.G."/>
            <person name="Wang P."/>
            <person name="Petrounia I."/>
            <person name="Mai S."/>
            <person name="Smith C."/>
            <person name="Askari H."/>
            <person name="Struble G.T."/>
            <person name="Williams R."/>
            <person name="Bhanot S."/>
            <person name="Monia B.P."/>
            <person name="Bayoumy S."/>
            <person name="Grant E."/>
            <person name="Caldwell G.W."/>
            <person name="Todd M.J."/>
            <person name="Liang Y."/>
            <person name="Gaul M.D."/>
            <person name="Demarest K.T."/>
            <person name="Connelly M.A."/>
        </authorList>
    </citation>
    <scope>FUNCTION</scope>
</reference>
<keyword id="KW-0012">Acyltransferase</keyword>
<keyword id="KW-0963">Cytoplasm</keyword>
<keyword id="KW-0256">Endoplasmic reticulum</keyword>
<keyword id="KW-0319">Glycerol metabolism</keyword>
<keyword id="KW-0444">Lipid biosynthesis</keyword>
<keyword id="KW-0551">Lipid droplet</keyword>
<keyword id="KW-0443">Lipid metabolism</keyword>
<keyword id="KW-0472">Membrane</keyword>
<keyword id="KW-1185">Reference proteome</keyword>
<keyword id="KW-0808">Transferase</keyword>
<keyword id="KW-0812">Transmembrane</keyword>
<keyword id="KW-1133">Transmembrane helix</keyword>
<proteinExistence type="evidence at protein level"/>
<name>DGAT2_MOUSE</name>
<gene>
    <name evidence="20" type="primary">Dgat2</name>
</gene>
<accession>Q9DCV3</accession>
<evidence type="ECO:0000250" key="1"/>
<evidence type="ECO:0000250" key="2">
    <source>
        <dbReference type="UniProtKB" id="Q96PD7"/>
    </source>
</evidence>
<evidence type="ECO:0000255" key="3"/>
<evidence type="ECO:0000269" key="4">
    <source>
    </source>
</evidence>
<evidence type="ECO:0000269" key="5">
    <source>
    </source>
</evidence>
<evidence type="ECO:0000269" key="6">
    <source>
    </source>
</evidence>
<evidence type="ECO:0000269" key="7">
    <source>
    </source>
</evidence>
<evidence type="ECO:0000269" key="8">
    <source>
    </source>
</evidence>
<evidence type="ECO:0000269" key="9">
    <source>
    </source>
</evidence>
<evidence type="ECO:0000269" key="10">
    <source>
    </source>
</evidence>
<evidence type="ECO:0000269" key="11">
    <source>
    </source>
</evidence>
<evidence type="ECO:0000269" key="12">
    <source>
    </source>
</evidence>
<evidence type="ECO:0000269" key="13">
    <source>
    </source>
</evidence>
<evidence type="ECO:0000269" key="14">
    <source>
    </source>
</evidence>
<evidence type="ECO:0000305" key="15"/>
<evidence type="ECO:0000305" key="16">
    <source>
    </source>
</evidence>
<evidence type="ECO:0000305" key="17">
    <source>
    </source>
</evidence>
<evidence type="ECO:0000305" key="18">
    <source>
    </source>
</evidence>
<evidence type="ECO:0000305" key="19">
    <source>
    </source>
</evidence>
<evidence type="ECO:0000312" key="20">
    <source>
        <dbReference type="MGI" id="MGI:1915050"/>
    </source>
</evidence>